<organism>
    <name type="scientific">Herpetosiphon aurantiacus (strain ATCC 23779 / DSM 785 / 114-95)</name>
    <dbReference type="NCBI Taxonomy" id="316274"/>
    <lineage>
        <taxon>Bacteria</taxon>
        <taxon>Bacillati</taxon>
        <taxon>Chloroflexota</taxon>
        <taxon>Chloroflexia</taxon>
        <taxon>Herpetosiphonales</taxon>
        <taxon>Herpetosiphonaceae</taxon>
        <taxon>Herpetosiphon</taxon>
    </lineage>
</organism>
<reference key="1">
    <citation type="journal article" date="2011" name="Stand. Genomic Sci.">
        <title>Complete genome sequence of the filamentous gliding predatory bacterium Herpetosiphon aurantiacus type strain (114-95(T)).</title>
        <authorList>
            <person name="Kiss H."/>
            <person name="Nett M."/>
            <person name="Domin N."/>
            <person name="Martin K."/>
            <person name="Maresca J.A."/>
            <person name="Copeland A."/>
            <person name="Lapidus A."/>
            <person name="Lucas S."/>
            <person name="Berry K.W."/>
            <person name="Glavina Del Rio T."/>
            <person name="Dalin E."/>
            <person name="Tice H."/>
            <person name="Pitluck S."/>
            <person name="Richardson P."/>
            <person name="Bruce D."/>
            <person name="Goodwin L."/>
            <person name="Han C."/>
            <person name="Detter J.C."/>
            <person name="Schmutz J."/>
            <person name="Brettin T."/>
            <person name="Land M."/>
            <person name="Hauser L."/>
            <person name="Kyrpides N.C."/>
            <person name="Ivanova N."/>
            <person name="Goeker M."/>
            <person name="Woyke T."/>
            <person name="Klenk H.P."/>
            <person name="Bryant D.A."/>
        </authorList>
    </citation>
    <scope>NUCLEOTIDE SEQUENCE [LARGE SCALE GENOMIC DNA]</scope>
    <source>
        <strain>ATCC 23779 / DSM 785 / 114-95</strain>
    </source>
</reference>
<dbReference type="EC" id="2.7.2.3" evidence="1"/>
<dbReference type="EMBL" id="CP000875">
    <property type="protein sequence ID" value="ABX07475.1"/>
    <property type="molecule type" value="Genomic_DNA"/>
</dbReference>
<dbReference type="SMR" id="A9B312"/>
<dbReference type="FunCoup" id="A9B312">
    <property type="interactions" value="446"/>
</dbReference>
<dbReference type="STRING" id="316274.Haur_4845"/>
<dbReference type="KEGG" id="hau:Haur_4845"/>
<dbReference type="eggNOG" id="COG0126">
    <property type="taxonomic scope" value="Bacteria"/>
</dbReference>
<dbReference type="HOGENOM" id="CLU_025427_0_2_0"/>
<dbReference type="InParanoid" id="A9B312"/>
<dbReference type="UniPathway" id="UPA00109">
    <property type="reaction ID" value="UER00185"/>
</dbReference>
<dbReference type="Proteomes" id="UP000000787">
    <property type="component" value="Chromosome"/>
</dbReference>
<dbReference type="GO" id="GO:0005829">
    <property type="term" value="C:cytosol"/>
    <property type="evidence" value="ECO:0007669"/>
    <property type="project" value="TreeGrafter"/>
</dbReference>
<dbReference type="GO" id="GO:0043531">
    <property type="term" value="F:ADP binding"/>
    <property type="evidence" value="ECO:0007669"/>
    <property type="project" value="TreeGrafter"/>
</dbReference>
<dbReference type="GO" id="GO:0005524">
    <property type="term" value="F:ATP binding"/>
    <property type="evidence" value="ECO:0007669"/>
    <property type="project" value="UniProtKB-KW"/>
</dbReference>
<dbReference type="GO" id="GO:0004618">
    <property type="term" value="F:phosphoglycerate kinase activity"/>
    <property type="evidence" value="ECO:0007669"/>
    <property type="project" value="UniProtKB-UniRule"/>
</dbReference>
<dbReference type="GO" id="GO:0006094">
    <property type="term" value="P:gluconeogenesis"/>
    <property type="evidence" value="ECO:0007669"/>
    <property type="project" value="TreeGrafter"/>
</dbReference>
<dbReference type="GO" id="GO:0006096">
    <property type="term" value="P:glycolytic process"/>
    <property type="evidence" value="ECO:0007669"/>
    <property type="project" value="UniProtKB-UniRule"/>
</dbReference>
<dbReference type="CDD" id="cd00318">
    <property type="entry name" value="Phosphoglycerate_kinase"/>
    <property type="match status" value="1"/>
</dbReference>
<dbReference type="FunFam" id="3.40.50.1260:FF:000003">
    <property type="entry name" value="Phosphoglycerate kinase"/>
    <property type="match status" value="1"/>
</dbReference>
<dbReference type="FunFam" id="3.40.50.1260:FF:000006">
    <property type="entry name" value="Phosphoglycerate kinase"/>
    <property type="match status" value="1"/>
</dbReference>
<dbReference type="Gene3D" id="3.40.50.1260">
    <property type="entry name" value="Phosphoglycerate kinase, N-terminal domain"/>
    <property type="match status" value="2"/>
</dbReference>
<dbReference type="HAMAP" id="MF_00145">
    <property type="entry name" value="Phosphoglyc_kinase"/>
    <property type="match status" value="1"/>
</dbReference>
<dbReference type="InterPro" id="IPR001576">
    <property type="entry name" value="Phosphoglycerate_kinase"/>
</dbReference>
<dbReference type="InterPro" id="IPR015824">
    <property type="entry name" value="Phosphoglycerate_kinase_N"/>
</dbReference>
<dbReference type="InterPro" id="IPR036043">
    <property type="entry name" value="Phosphoglycerate_kinase_sf"/>
</dbReference>
<dbReference type="PANTHER" id="PTHR11406">
    <property type="entry name" value="PHOSPHOGLYCERATE KINASE"/>
    <property type="match status" value="1"/>
</dbReference>
<dbReference type="PANTHER" id="PTHR11406:SF23">
    <property type="entry name" value="PHOSPHOGLYCERATE KINASE 1, CHLOROPLASTIC-RELATED"/>
    <property type="match status" value="1"/>
</dbReference>
<dbReference type="Pfam" id="PF00162">
    <property type="entry name" value="PGK"/>
    <property type="match status" value="1"/>
</dbReference>
<dbReference type="PIRSF" id="PIRSF000724">
    <property type="entry name" value="Pgk"/>
    <property type="match status" value="1"/>
</dbReference>
<dbReference type="PRINTS" id="PR00477">
    <property type="entry name" value="PHGLYCKINASE"/>
</dbReference>
<dbReference type="SUPFAM" id="SSF53748">
    <property type="entry name" value="Phosphoglycerate kinase"/>
    <property type="match status" value="1"/>
</dbReference>
<evidence type="ECO:0000255" key="1">
    <source>
        <dbReference type="HAMAP-Rule" id="MF_00145"/>
    </source>
</evidence>
<sequence>MNKQTIRDVAWSGKRALVRVDFNVPLDQARKVTDDTRIRAALPTINYLLEQGASVILMSHLGRPKKKVAEEFRLKPVADHLQSLLDAPVNYIQTTTGAEAEAAAQALQAGQVLLLENTRFDPREESNDPAMAEELAKLGDIYVNDAFGAAHRAHASTEGLAKFLPAVAGFLMEAELAALGKALDDPQRPFVTIIGGAKISDKIGVIENLLGKVDSLLIGGGMANTFLLAQNKAVGASLVEADSVAEAGRLIDEAQGRGVKLLLPSDVVVADAFSAEANTQVLSIDDVPDGWRILDIGPETRQTYSQVVSEAKTVIWNGPMGVFELEPFAAGTRAVAQALADSSAITIIGGGDSVAAIEQMGLAEKMSHISTGGGASLELLEGKVLPGIAALNDK</sequence>
<comment type="catalytic activity">
    <reaction evidence="1">
        <text>(2R)-3-phosphoglycerate + ATP = (2R)-3-phospho-glyceroyl phosphate + ADP</text>
        <dbReference type="Rhea" id="RHEA:14801"/>
        <dbReference type="ChEBI" id="CHEBI:30616"/>
        <dbReference type="ChEBI" id="CHEBI:57604"/>
        <dbReference type="ChEBI" id="CHEBI:58272"/>
        <dbReference type="ChEBI" id="CHEBI:456216"/>
        <dbReference type="EC" id="2.7.2.3"/>
    </reaction>
</comment>
<comment type="pathway">
    <text evidence="1">Carbohydrate degradation; glycolysis; pyruvate from D-glyceraldehyde 3-phosphate: step 2/5.</text>
</comment>
<comment type="subunit">
    <text evidence="1">Monomer.</text>
</comment>
<comment type="subcellular location">
    <subcellularLocation>
        <location evidence="1">Cytoplasm</location>
    </subcellularLocation>
</comment>
<comment type="similarity">
    <text evidence="1">Belongs to the phosphoglycerate kinase family.</text>
</comment>
<name>PGK_HERA2</name>
<gene>
    <name evidence="1" type="primary">pgk</name>
    <name type="ordered locus">Haur_4845</name>
</gene>
<accession>A9B312</accession>
<feature type="chain" id="PRO_1000096348" description="Phosphoglycerate kinase">
    <location>
        <begin position="1"/>
        <end position="394"/>
    </location>
</feature>
<feature type="binding site" evidence="1">
    <location>
        <begin position="21"/>
        <end position="23"/>
    </location>
    <ligand>
        <name>substrate</name>
    </ligand>
</feature>
<feature type="binding site" evidence="1">
    <location>
        <position position="37"/>
    </location>
    <ligand>
        <name>substrate</name>
    </ligand>
</feature>
<feature type="binding site" evidence="1">
    <location>
        <begin position="60"/>
        <end position="63"/>
    </location>
    <ligand>
        <name>substrate</name>
    </ligand>
</feature>
<feature type="binding site" evidence="1">
    <location>
        <position position="119"/>
    </location>
    <ligand>
        <name>substrate</name>
    </ligand>
</feature>
<feature type="binding site" evidence="1">
    <location>
        <position position="152"/>
    </location>
    <ligand>
        <name>substrate</name>
    </ligand>
</feature>
<feature type="binding site" evidence="1">
    <location>
        <position position="202"/>
    </location>
    <ligand>
        <name>ATP</name>
        <dbReference type="ChEBI" id="CHEBI:30616"/>
    </ligand>
</feature>
<feature type="binding site" evidence="1">
    <location>
        <position position="324"/>
    </location>
    <ligand>
        <name>ATP</name>
        <dbReference type="ChEBI" id="CHEBI:30616"/>
    </ligand>
</feature>
<feature type="binding site" evidence="1">
    <location>
        <begin position="350"/>
        <end position="353"/>
    </location>
    <ligand>
        <name>ATP</name>
        <dbReference type="ChEBI" id="CHEBI:30616"/>
    </ligand>
</feature>
<proteinExistence type="inferred from homology"/>
<keyword id="KW-0067">ATP-binding</keyword>
<keyword id="KW-0963">Cytoplasm</keyword>
<keyword id="KW-0324">Glycolysis</keyword>
<keyword id="KW-0418">Kinase</keyword>
<keyword id="KW-0547">Nucleotide-binding</keyword>
<keyword id="KW-0808">Transferase</keyword>
<protein>
    <recommendedName>
        <fullName evidence="1">Phosphoglycerate kinase</fullName>
        <ecNumber evidence="1">2.7.2.3</ecNumber>
    </recommendedName>
</protein>